<gene>
    <name type="ORF">OCC_04335</name>
</gene>
<organism>
    <name type="scientific">Thermococcus litoralis (strain ATCC 51850 / DSM 5473 / JCM 8560 / NS-C)</name>
    <dbReference type="NCBI Taxonomy" id="523849"/>
    <lineage>
        <taxon>Archaea</taxon>
        <taxon>Methanobacteriati</taxon>
        <taxon>Methanobacteriota</taxon>
        <taxon>Thermococci</taxon>
        <taxon>Thermococcales</taxon>
        <taxon>Thermococcaceae</taxon>
        <taxon>Thermococcus</taxon>
    </lineage>
</organism>
<proteinExistence type="evidence at protein level"/>
<accession>H3ZPL1</accession>
<accession>Q9UWK9</accession>
<keyword id="KW-0032">Aminotransferase</keyword>
<keyword id="KW-0903">Direct protein sequencing</keyword>
<keyword id="KW-0663">Pyridoxal phosphate</keyword>
<keyword id="KW-0808">Transferase</keyword>
<feature type="chain" id="PRO_0000429269" description="Aromatic-amino-acid aminotransferase 1">
    <location>
        <begin position="1"/>
        <end position="417"/>
    </location>
</feature>
<feature type="modified residue" description="N6-(pyridoxal phosphate)lysine" evidence="1">
    <location>
        <position position="258"/>
    </location>
</feature>
<feature type="sequence conflict" description="In Ref. 2; AA sequence." evidence="3" ref="2">
    <original>E</original>
    <variation>D</variation>
    <location>
        <position position="19"/>
    </location>
</feature>
<feature type="sequence conflict" description="In Ref. 2; AA sequence." evidence="3" ref="2">
    <original>K</original>
    <variation>R</variation>
    <location>
        <position position="30"/>
    </location>
</feature>
<protein>
    <recommendedName>
        <fullName>Aromatic-amino-acid aminotransferase 1</fullName>
        <shortName>ARAT-I</shortName>
        <shortName>AROAT</shortName>
        <ecNumber>2.6.1.57</ecNumber>
    </recommendedName>
</protein>
<dbReference type="EC" id="2.6.1.57"/>
<dbReference type="EMBL" id="CP006670">
    <property type="protein sequence ID" value="EHR78055.1"/>
    <property type="molecule type" value="Genomic_DNA"/>
</dbReference>
<dbReference type="PIR" id="S42354">
    <property type="entry name" value="S42354"/>
</dbReference>
<dbReference type="RefSeq" id="WP_004069050.1">
    <property type="nucleotide sequence ID" value="NC_022084.1"/>
</dbReference>
<dbReference type="SMR" id="H3ZPL1"/>
<dbReference type="STRING" id="523849.OCC_04335"/>
<dbReference type="PaxDb" id="523849-OCC_04335"/>
<dbReference type="GeneID" id="16548664"/>
<dbReference type="KEGG" id="tlt:OCC_04335"/>
<dbReference type="HOGENOM" id="CLU_017584_0_6_2"/>
<dbReference type="OrthoDB" id="372018at2157"/>
<dbReference type="Proteomes" id="UP000015502">
    <property type="component" value="Chromosome"/>
</dbReference>
<dbReference type="GO" id="GO:0008793">
    <property type="term" value="F:aromatic-amino-acid transaminase activity"/>
    <property type="evidence" value="ECO:0007669"/>
    <property type="project" value="RHEA"/>
</dbReference>
<dbReference type="GO" id="GO:0030170">
    <property type="term" value="F:pyridoxal phosphate binding"/>
    <property type="evidence" value="ECO:0007669"/>
    <property type="project" value="InterPro"/>
</dbReference>
<dbReference type="GO" id="GO:1901605">
    <property type="term" value="P:alpha-amino acid metabolic process"/>
    <property type="evidence" value="ECO:0007669"/>
    <property type="project" value="TreeGrafter"/>
</dbReference>
<dbReference type="GO" id="GO:0009058">
    <property type="term" value="P:biosynthetic process"/>
    <property type="evidence" value="ECO:0007669"/>
    <property type="project" value="InterPro"/>
</dbReference>
<dbReference type="CDD" id="cd00609">
    <property type="entry name" value="AAT_like"/>
    <property type="match status" value="1"/>
</dbReference>
<dbReference type="FunFam" id="3.40.640.10:FF:000053">
    <property type="entry name" value="Aminotransferase, class I"/>
    <property type="match status" value="1"/>
</dbReference>
<dbReference type="FunFam" id="3.90.1150.10:FF:000054">
    <property type="entry name" value="Aminotransferase, class I"/>
    <property type="match status" value="1"/>
</dbReference>
<dbReference type="Gene3D" id="3.90.1150.10">
    <property type="entry name" value="Aspartate Aminotransferase, domain 1"/>
    <property type="match status" value="1"/>
</dbReference>
<dbReference type="Gene3D" id="3.40.640.10">
    <property type="entry name" value="Type I PLP-dependent aspartate aminotransferase-like (Major domain)"/>
    <property type="match status" value="1"/>
</dbReference>
<dbReference type="InterPro" id="IPR004839">
    <property type="entry name" value="Aminotransferase_I/II_large"/>
</dbReference>
<dbReference type="InterPro" id="IPR050859">
    <property type="entry name" value="Class-I_PLP-dep_aminotransf"/>
</dbReference>
<dbReference type="InterPro" id="IPR015424">
    <property type="entry name" value="PyrdxlP-dep_Trfase"/>
</dbReference>
<dbReference type="InterPro" id="IPR015421">
    <property type="entry name" value="PyrdxlP-dep_Trfase_major"/>
</dbReference>
<dbReference type="InterPro" id="IPR015422">
    <property type="entry name" value="PyrdxlP-dep_Trfase_small"/>
</dbReference>
<dbReference type="PANTHER" id="PTHR42790">
    <property type="entry name" value="AMINOTRANSFERASE"/>
    <property type="match status" value="1"/>
</dbReference>
<dbReference type="PANTHER" id="PTHR42790:SF19">
    <property type="entry name" value="KYNURENINE_ALPHA-AMINOADIPATE AMINOTRANSFERASE, MITOCHONDRIAL"/>
    <property type="match status" value="1"/>
</dbReference>
<dbReference type="Pfam" id="PF00155">
    <property type="entry name" value="Aminotran_1_2"/>
    <property type="match status" value="1"/>
</dbReference>
<dbReference type="SUPFAM" id="SSF53383">
    <property type="entry name" value="PLP-dependent transferases"/>
    <property type="match status" value="1"/>
</dbReference>
<reference key="1">
    <citation type="journal article" date="2012" name="J. Bacteriol.">
        <title>Genome sequence of the model hyperthermophilic archaeon Thermococcus litoralis NS-C.</title>
        <authorList>
            <person name="Gardner A.F."/>
            <person name="Kumar S."/>
            <person name="Perler F.B."/>
        </authorList>
    </citation>
    <scope>NUCLEOTIDE SEQUENCE [LARGE SCALE GENOMIC DNA]</scope>
    <source>
        <strain>ATCC 51850 / DSM 5473 / JCM 8560 / NS-C</strain>
    </source>
</reference>
<reference key="2">
    <citation type="journal article" date="1994" name="Eur. J. Biochem.">
        <title>Characterization of aromatic aminotransferases from the hyperthermophilic archaeon Thermococcus litoralis.</title>
        <authorList>
            <person name="Andreotti G."/>
            <person name="Cubellis M.V."/>
            <person name="Nitti G."/>
            <person name="Sannia G."/>
            <person name="Mai X."/>
            <person name="Marino G."/>
            <person name="Adams M.W."/>
        </authorList>
    </citation>
    <scope>PROTEIN SEQUENCE OF 8-34</scope>
    <scope>FUNCTION</scope>
    <scope>CATALYTIC ACTIVITY</scope>
    <scope>COFACTOR</scope>
    <scope>BIOPHYSICOCHEMICAL PROPERTIES</scope>
    <scope>SUBUNIT</scope>
    <source>
        <strain>ATCC 51850 / DSM 5473 / JCM 8560 / NS-C</strain>
    </source>
</reference>
<name>ARAT1_THELN</name>
<comment type="function">
    <text evidence="2">Catalyzes the transamination of phenylalanine, tyrosine and tryptophan. Shows virtually no activity towards aspartic acid, alanine, valine or isoleucine.</text>
</comment>
<comment type="catalytic activity">
    <reaction evidence="2">
        <text>an aromatic L-alpha-amino acid + 2-oxoglutarate = an aromatic oxo-acid + L-glutamate</text>
        <dbReference type="Rhea" id="RHEA:17533"/>
        <dbReference type="ChEBI" id="CHEBI:16810"/>
        <dbReference type="ChEBI" id="CHEBI:29985"/>
        <dbReference type="ChEBI" id="CHEBI:73309"/>
        <dbReference type="ChEBI" id="CHEBI:84824"/>
        <dbReference type="EC" id="2.6.1.57"/>
    </reaction>
</comment>
<comment type="cofactor">
    <cofactor evidence="4">
        <name>pyridoxal 5'-phosphate</name>
        <dbReference type="ChEBI" id="CHEBI:597326"/>
    </cofactor>
</comment>
<comment type="biophysicochemical properties">
    <kinetics>
        <KM evidence="2">0.55 mM for phenylalanine</KM>
        <KM evidence="2">2.39 mM for tyrosine</KM>
        <KM evidence="2">1.47 mM for tryptophan</KM>
        <KM evidence="2">0.44 mM for 2-oxoglutarate</KM>
    </kinetics>
    <temperatureDependence>
        <text evidence="2">Optimum temperature is 95-100 degrees Celsius.</text>
    </temperatureDependence>
</comment>
<comment type="subunit">
    <text evidence="2">Homodimer.</text>
</comment>
<comment type="similarity">
    <text evidence="3">Belongs to the class-I pyridoxal-phosphate-dependent aminotransferase family.</text>
</comment>
<evidence type="ECO:0000250" key="1"/>
<evidence type="ECO:0000269" key="2">
    <source>
    </source>
</evidence>
<evidence type="ECO:0000305" key="3"/>
<evidence type="ECO:0000305" key="4">
    <source>
    </source>
</evidence>
<sequence length="417" mass="47610">MELEKRLKEKLEAPTLDYEKYFSEKALGMKASEIRELLKLVETSDVISLAGGLPAPETFPVEIIGEITKEVLEKHAAQALQYGTTKGFTPLRLALAEWMRERYDIPISKVDIMTTSGSQQALDLIGRVFINPGDIIVVEAPTYLAALQAFKYYEPEFVQIPLDDEGMNVDLLEEKLQELEKEGKKVKIVYTIPTFQNPAGVTMNEKRRKRLLELASQYDFIIVEDNPYGELRYSGEPVKPIKAWDEEGRVIYLGTFSKILAPGFRIGWIAAEPHFIRKLEIAKQSVDLCTNTFSQVIAWKYVEGGYLDKHIPKIIEFYKPRRDAMLKALEEFMPDGVKWTKPEGGMFVWATLPEGIDTKLMLEKAVAKGVAYVPGEAFFAHRDVKNTMRLNFTYVPEEKIREGIKRLAETIKEEMKK</sequence>